<accession>Q5QV29</accession>
<keyword id="KW-0963">Cytoplasm</keyword>
<keyword id="KW-0369">Histidine metabolism</keyword>
<keyword id="KW-0456">Lyase</keyword>
<keyword id="KW-0520">NAD</keyword>
<keyword id="KW-1185">Reference proteome</keyword>
<name>HUTU_IDILO</name>
<proteinExistence type="inferred from homology"/>
<dbReference type="EC" id="4.2.1.49" evidence="1"/>
<dbReference type="EMBL" id="AE017340">
    <property type="protein sequence ID" value="AAV83283.1"/>
    <property type="molecule type" value="Genomic_DNA"/>
</dbReference>
<dbReference type="RefSeq" id="WP_011235676.1">
    <property type="nucleotide sequence ID" value="NC_006512.1"/>
</dbReference>
<dbReference type="SMR" id="Q5QV29"/>
<dbReference type="STRING" id="283942.IL2451"/>
<dbReference type="GeneID" id="41337645"/>
<dbReference type="KEGG" id="ilo:IL2451"/>
<dbReference type="eggNOG" id="COG2987">
    <property type="taxonomic scope" value="Bacteria"/>
</dbReference>
<dbReference type="HOGENOM" id="CLU_018868_0_1_6"/>
<dbReference type="OrthoDB" id="9764874at2"/>
<dbReference type="UniPathway" id="UPA00379">
    <property type="reaction ID" value="UER00550"/>
</dbReference>
<dbReference type="Proteomes" id="UP000001171">
    <property type="component" value="Chromosome"/>
</dbReference>
<dbReference type="GO" id="GO:0005737">
    <property type="term" value="C:cytoplasm"/>
    <property type="evidence" value="ECO:0007669"/>
    <property type="project" value="UniProtKB-SubCell"/>
</dbReference>
<dbReference type="GO" id="GO:0016153">
    <property type="term" value="F:urocanate hydratase activity"/>
    <property type="evidence" value="ECO:0007669"/>
    <property type="project" value="UniProtKB-UniRule"/>
</dbReference>
<dbReference type="GO" id="GO:0019556">
    <property type="term" value="P:L-histidine catabolic process to glutamate and formamide"/>
    <property type="evidence" value="ECO:0007669"/>
    <property type="project" value="UniProtKB-UniPathway"/>
</dbReference>
<dbReference type="GO" id="GO:0019557">
    <property type="term" value="P:L-histidine catabolic process to glutamate and formate"/>
    <property type="evidence" value="ECO:0007669"/>
    <property type="project" value="UniProtKB-UniPathway"/>
</dbReference>
<dbReference type="FunFam" id="3.40.50.10730:FF:000001">
    <property type="entry name" value="Urocanate hydratase"/>
    <property type="match status" value="1"/>
</dbReference>
<dbReference type="Gene3D" id="3.40.50.10730">
    <property type="entry name" value="Urocanase like domains"/>
    <property type="match status" value="1"/>
</dbReference>
<dbReference type="Gene3D" id="3.40.1770.10">
    <property type="entry name" value="Urocanase superfamily"/>
    <property type="match status" value="1"/>
</dbReference>
<dbReference type="HAMAP" id="MF_00577">
    <property type="entry name" value="HutU"/>
    <property type="match status" value="1"/>
</dbReference>
<dbReference type="InterPro" id="IPR055351">
    <property type="entry name" value="Urocanase"/>
</dbReference>
<dbReference type="InterPro" id="IPR023637">
    <property type="entry name" value="Urocanase-like"/>
</dbReference>
<dbReference type="InterPro" id="IPR035401">
    <property type="entry name" value="Urocanase_C"/>
</dbReference>
<dbReference type="InterPro" id="IPR038364">
    <property type="entry name" value="Urocanase_central_sf"/>
</dbReference>
<dbReference type="InterPro" id="IPR023636">
    <property type="entry name" value="Urocanase_CS"/>
</dbReference>
<dbReference type="InterPro" id="IPR035400">
    <property type="entry name" value="Urocanase_N"/>
</dbReference>
<dbReference type="InterPro" id="IPR035085">
    <property type="entry name" value="Urocanase_Rossmann-like"/>
</dbReference>
<dbReference type="InterPro" id="IPR036190">
    <property type="entry name" value="Urocanase_sf"/>
</dbReference>
<dbReference type="NCBIfam" id="TIGR01228">
    <property type="entry name" value="hutU"/>
    <property type="match status" value="1"/>
</dbReference>
<dbReference type="NCBIfam" id="NF003820">
    <property type="entry name" value="PRK05414.1"/>
    <property type="match status" value="1"/>
</dbReference>
<dbReference type="PANTHER" id="PTHR12216">
    <property type="entry name" value="UROCANATE HYDRATASE"/>
    <property type="match status" value="1"/>
</dbReference>
<dbReference type="PANTHER" id="PTHR12216:SF4">
    <property type="entry name" value="UROCANATE HYDRATASE"/>
    <property type="match status" value="1"/>
</dbReference>
<dbReference type="Pfam" id="PF01175">
    <property type="entry name" value="Urocanase"/>
    <property type="match status" value="1"/>
</dbReference>
<dbReference type="Pfam" id="PF17392">
    <property type="entry name" value="Urocanase_C"/>
    <property type="match status" value="1"/>
</dbReference>
<dbReference type="Pfam" id="PF17391">
    <property type="entry name" value="Urocanase_N"/>
    <property type="match status" value="1"/>
</dbReference>
<dbReference type="PIRSF" id="PIRSF001423">
    <property type="entry name" value="Urocanate_hydrat"/>
    <property type="match status" value="1"/>
</dbReference>
<dbReference type="SUPFAM" id="SSF111326">
    <property type="entry name" value="Urocanase"/>
    <property type="match status" value="1"/>
</dbReference>
<dbReference type="PROSITE" id="PS01233">
    <property type="entry name" value="UROCANASE"/>
    <property type="match status" value="1"/>
</dbReference>
<comment type="function">
    <text evidence="1">Catalyzes the conversion of urocanate to 4-imidazolone-5-propionate.</text>
</comment>
<comment type="catalytic activity">
    <reaction evidence="1">
        <text>4-imidazolone-5-propanoate = trans-urocanate + H2O</text>
        <dbReference type="Rhea" id="RHEA:13101"/>
        <dbReference type="ChEBI" id="CHEBI:15377"/>
        <dbReference type="ChEBI" id="CHEBI:17771"/>
        <dbReference type="ChEBI" id="CHEBI:77893"/>
        <dbReference type="EC" id="4.2.1.49"/>
    </reaction>
</comment>
<comment type="cofactor">
    <cofactor evidence="1">
        <name>NAD(+)</name>
        <dbReference type="ChEBI" id="CHEBI:57540"/>
    </cofactor>
    <text evidence="1">Binds 1 NAD(+) per subunit.</text>
</comment>
<comment type="pathway">
    <text evidence="1">Amino-acid degradation; L-histidine degradation into L-glutamate; N-formimidoyl-L-glutamate from L-histidine: step 2/3.</text>
</comment>
<comment type="subcellular location">
    <subcellularLocation>
        <location evidence="1">Cytoplasm</location>
    </subcellularLocation>
</comment>
<comment type="similarity">
    <text evidence="1">Belongs to the urocanase family.</text>
</comment>
<gene>
    <name evidence="1" type="primary">hutU</name>
    <name type="ordered locus">IL2451</name>
</gene>
<organism>
    <name type="scientific">Idiomarina loihiensis (strain ATCC BAA-735 / DSM 15497 / L2-TR)</name>
    <dbReference type="NCBI Taxonomy" id="283942"/>
    <lineage>
        <taxon>Bacteria</taxon>
        <taxon>Pseudomonadati</taxon>
        <taxon>Pseudomonadota</taxon>
        <taxon>Gammaproteobacteria</taxon>
        <taxon>Alteromonadales</taxon>
        <taxon>Idiomarinaceae</taxon>
        <taxon>Idiomarina</taxon>
    </lineage>
</organism>
<reference key="1">
    <citation type="journal article" date="2004" name="Proc. Natl. Acad. Sci. U.S.A.">
        <title>Genome sequence of the deep-sea gamma-proteobacterium Idiomarina loihiensis reveals amino acid fermentation as a source of carbon and energy.</title>
        <authorList>
            <person name="Hou S."/>
            <person name="Saw J.H."/>
            <person name="Lee K.S."/>
            <person name="Freitas T.A."/>
            <person name="Belisle C."/>
            <person name="Kawarabayasi Y."/>
            <person name="Donachie S.P."/>
            <person name="Pikina A."/>
            <person name="Galperin M.Y."/>
            <person name="Koonin E.V."/>
            <person name="Makarova K.S."/>
            <person name="Omelchenko M.V."/>
            <person name="Sorokin A."/>
            <person name="Wolf Y.I."/>
            <person name="Li Q.X."/>
            <person name="Keum Y.S."/>
            <person name="Campbell S."/>
            <person name="Denery J."/>
            <person name="Aizawa S."/>
            <person name="Shibata S."/>
            <person name="Malahoff A."/>
            <person name="Alam M."/>
        </authorList>
    </citation>
    <scope>NUCLEOTIDE SEQUENCE [LARGE SCALE GENOMIC DNA]</scope>
    <source>
        <strain>ATCC BAA-735 / DSM 15497 / L2-TR</strain>
    </source>
</reference>
<sequence length="558" mass="61003">MSFTRLDKSRKISAPHGTELTTCNWQVEAAKRMLMNNLDDEVAEHPQALVVYGGIGRAARSWECYDKIIETLERLKPDESLLIQSGKPVGVFPTHENAPRVLIANSNLVPEWANWEHFNELDKKGLMMYGQMTAGSWIYIGSQGIVQGTYETFGSVSRQHFNGDAKGKWVLTGGLGGMGGAQPLAATMAGFCMLAVECDESRIDFRLRTGYVDHKATNLDDALKLINDAMAKGEAISVGLLGNAADVYSELQQQGVTPDVVTDQTSAHDPLHGYLPQGWTLEEYKAKQESDATGTVNAAKESMAVQVRAMLHFQKEGAAVLDYGNNIRQMAKDVGVDNAFDFPGFVPAYIRPLFCEGIGPFRWVALSGDPEDIYKTDEKVKELIPDNEHLHNWLDMAKERISFQGLPSRICWIGLKDRARIARAFNDMVKSGELKAPVVIGRDHLDSGSVASPNRETEAMQDGSDAVSDWPLLNALLNTAGGATWVSLHHGGGVGMGYSQHAGVVIVADGTEEADKRLGRVLWNDPGTGVMRHADAGYDIAKNCAREQGLDLPMLDTK</sequence>
<feature type="chain" id="PRO_1000025131" description="Urocanate hydratase">
    <location>
        <begin position="1"/>
        <end position="558"/>
    </location>
</feature>
<feature type="active site" evidence="1">
    <location>
        <position position="411"/>
    </location>
</feature>
<feature type="binding site" evidence="1">
    <location>
        <begin position="53"/>
        <end position="54"/>
    </location>
    <ligand>
        <name>NAD(+)</name>
        <dbReference type="ChEBI" id="CHEBI:57540"/>
    </ligand>
</feature>
<feature type="binding site" evidence="1">
    <location>
        <position position="131"/>
    </location>
    <ligand>
        <name>NAD(+)</name>
        <dbReference type="ChEBI" id="CHEBI:57540"/>
    </ligand>
</feature>
<feature type="binding site" evidence="1">
    <location>
        <begin position="177"/>
        <end position="179"/>
    </location>
    <ligand>
        <name>NAD(+)</name>
        <dbReference type="ChEBI" id="CHEBI:57540"/>
    </ligand>
</feature>
<feature type="binding site" evidence="1">
    <location>
        <position position="197"/>
    </location>
    <ligand>
        <name>NAD(+)</name>
        <dbReference type="ChEBI" id="CHEBI:57540"/>
    </ligand>
</feature>
<feature type="binding site" evidence="1">
    <location>
        <position position="202"/>
    </location>
    <ligand>
        <name>NAD(+)</name>
        <dbReference type="ChEBI" id="CHEBI:57540"/>
    </ligand>
</feature>
<feature type="binding site" evidence="1">
    <location>
        <begin position="243"/>
        <end position="244"/>
    </location>
    <ligand>
        <name>NAD(+)</name>
        <dbReference type="ChEBI" id="CHEBI:57540"/>
    </ligand>
</feature>
<feature type="binding site" evidence="1">
    <location>
        <begin position="264"/>
        <end position="268"/>
    </location>
    <ligand>
        <name>NAD(+)</name>
        <dbReference type="ChEBI" id="CHEBI:57540"/>
    </ligand>
</feature>
<feature type="binding site" evidence="1">
    <location>
        <begin position="274"/>
        <end position="275"/>
    </location>
    <ligand>
        <name>NAD(+)</name>
        <dbReference type="ChEBI" id="CHEBI:57540"/>
    </ligand>
</feature>
<feature type="binding site" evidence="1">
    <location>
        <position position="323"/>
    </location>
    <ligand>
        <name>NAD(+)</name>
        <dbReference type="ChEBI" id="CHEBI:57540"/>
    </ligand>
</feature>
<feature type="binding site" evidence="1">
    <location>
        <position position="493"/>
    </location>
    <ligand>
        <name>NAD(+)</name>
        <dbReference type="ChEBI" id="CHEBI:57540"/>
    </ligand>
</feature>
<protein>
    <recommendedName>
        <fullName evidence="1">Urocanate hydratase</fullName>
        <shortName evidence="1">Urocanase</shortName>
        <ecNumber evidence="1">4.2.1.49</ecNumber>
    </recommendedName>
    <alternativeName>
        <fullName evidence="1">Imidazolonepropionate hydrolase</fullName>
    </alternativeName>
</protein>
<evidence type="ECO:0000255" key="1">
    <source>
        <dbReference type="HAMAP-Rule" id="MF_00577"/>
    </source>
</evidence>